<organism>
    <name type="scientific">Salinispora arenicola (strain CNS-205)</name>
    <dbReference type="NCBI Taxonomy" id="391037"/>
    <lineage>
        <taxon>Bacteria</taxon>
        <taxon>Bacillati</taxon>
        <taxon>Actinomycetota</taxon>
        <taxon>Actinomycetes</taxon>
        <taxon>Micromonosporales</taxon>
        <taxon>Micromonosporaceae</taxon>
        <taxon>Salinispora</taxon>
    </lineage>
</organism>
<dbReference type="EC" id="2.7.8.7" evidence="1"/>
<dbReference type="EMBL" id="CP000850">
    <property type="protein sequence ID" value="ABW00031.1"/>
    <property type="molecule type" value="Genomic_DNA"/>
</dbReference>
<dbReference type="SMR" id="A8M4B5"/>
<dbReference type="STRING" id="391037.Sare_4249"/>
<dbReference type="KEGG" id="saq:Sare_4249"/>
<dbReference type="PATRIC" id="fig|391037.6.peg.4289"/>
<dbReference type="eggNOG" id="COG0736">
    <property type="taxonomic scope" value="Bacteria"/>
</dbReference>
<dbReference type="HOGENOM" id="CLU_089696_0_0_11"/>
<dbReference type="OrthoDB" id="517356at2"/>
<dbReference type="GO" id="GO:0005737">
    <property type="term" value="C:cytoplasm"/>
    <property type="evidence" value="ECO:0007669"/>
    <property type="project" value="UniProtKB-SubCell"/>
</dbReference>
<dbReference type="GO" id="GO:0008897">
    <property type="term" value="F:holo-[acyl-carrier-protein] synthase activity"/>
    <property type="evidence" value="ECO:0007669"/>
    <property type="project" value="UniProtKB-UniRule"/>
</dbReference>
<dbReference type="GO" id="GO:0000287">
    <property type="term" value="F:magnesium ion binding"/>
    <property type="evidence" value="ECO:0007669"/>
    <property type="project" value="UniProtKB-UniRule"/>
</dbReference>
<dbReference type="GO" id="GO:0006633">
    <property type="term" value="P:fatty acid biosynthetic process"/>
    <property type="evidence" value="ECO:0007669"/>
    <property type="project" value="UniProtKB-UniRule"/>
</dbReference>
<dbReference type="Gene3D" id="3.90.470.20">
    <property type="entry name" value="4'-phosphopantetheinyl transferase domain"/>
    <property type="match status" value="1"/>
</dbReference>
<dbReference type="HAMAP" id="MF_00101">
    <property type="entry name" value="AcpS"/>
    <property type="match status" value="1"/>
</dbReference>
<dbReference type="InterPro" id="IPR008278">
    <property type="entry name" value="4-PPantetheinyl_Trfase_dom"/>
</dbReference>
<dbReference type="InterPro" id="IPR037143">
    <property type="entry name" value="4-PPantetheinyl_Trfase_dom_sf"/>
</dbReference>
<dbReference type="InterPro" id="IPR002582">
    <property type="entry name" value="ACPS"/>
</dbReference>
<dbReference type="InterPro" id="IPR004568">
    <property type="entry name" value="Ppantetheine-prot_Trfase_dom"/>
</dbReference>
<dbReference type="NCBIfam" id="TIGR00516">
    <property type="entry name" value="acpS"/>
    <property type="match status" value="1"/>
</dbReference>
<dbReference type="NCBIfam" id="TIGR00556">
    <property type="entry name" value="pantethn_trn"/>
    <property type="match status" value="1"/>
</dbReference>
<dbReference type="NCBIfam" id="NF000832">
    <property type="entry name" value="PRK00070.3-2"/>
    <property type="match status" value="1"/>
</dbReference>
<dbReference type="Pfam" id="PF01648">
    <property type="entry name" value="ACPS"/>
    <property type="match status" value="1"/>
</dbReference>
<dbReference type="SUPFAM" id="SSF56214">
    <property type="entry name" value="4'-phosphopantetheinyl transferase"/>
    <property type="match status" value="1"/>
</dbReference>
<evidence type="ECO:0000255" key="1">
    <source>
        <dbReference type="HAMAP-Rule" id="MF_00101"/>
    </source>
</evidence>
<name>ACPS_SALAI</name>
<comment type="function">
    <text evidence="1">Transfers the 4'-phosphopantetheine moiety from coenzyme A to a Ser of acyl-carrier-protein.</text>
</comment>
<comment type="catalytic activity">
    <reaction evidence="1">
        <text>apo-[ACP] + CoA = holo-[ACP] + adenosine 3',5'-bisphosphate + H(+)</text>
        <dbReference type="Rhea" id="RHEA:12068"/>
        <dbReference type="Rhea" id="RHEA-COMP:9685"/>
        <dbReference type="Rhea" id="RHEA-COMP:9690"/>
        <dbReference type="ChEBI" id="CHEBI:15378"/>
        <dbReference type="ChEBI" id="CHEBI:29999"/>
        <dbReference type="ChEBI" id="CHEBI:57287"/>
        <dbReference type="ChEBI" id="CHEBI:58343"/>
        <dbReference type="ChEBI" id="CHEBI:64479"/>
        <dbReference type="EC" id="2.7.8.7"/>
    </reaction>
</comment>
<comment type="cofactor">
    <cofactor evidence="1">
        <name>Mg(2+)</name>
        <dbReference type="ChEBI" id="CHEBI:18420"/>
    </cofactor>
</comment>
<comment type="subcellular location">
    <subcellularLocation>
        <location evidence="1">Cytoplasm</location>
    </subcellularLocation>
</comment>
<comment type="similarity">
    <text evidence="1">Belongs to the P-Pant transferase superfamily. AcpS family.</text>
</comment>
<feature type="chain" id="PRO_1000075656" description="Holo-[acyl-carrier-protein] synthase">
    <location>
        <begin position="1"/>
        <end position="122"/>
    </location>
</feature>
<feature type="binding site" evidence="1">
    <location>
        <position position="8"/>
    </location>
    <ligand>
        <name>Mg(2+)</name>
        <dbReference type="ChEBI" id="CHEBI:18420"/>
    </ligand>
</feature>
<feature type="binding site" evidence="1">
    <location>
        <position position="56"/>
    </location>
    <ligand>
        <name>Mg(2+)</name>
        <dbReference type="ChEBI" id="CHEBI:18420"/>
    </ligand>
</feature>
<protein>
    <recommendedName>
        <fullName evidence="1">Holo-[acyl-carrier-protein] synthase</fullName>
        <shortName evidence="1">Holo-ACP synthase</shortName>
        <ecNumber evidence="1">2.7.8.7</ecNumber>
    </recommendedName>
    <alternativeName>
        <fullName evidence="1">4'-phosphopantetheinyl transferase AcpS</fullName>
    </alternativeName>
</protein>
<proteinExistence type="inferred from homology"/>
<sequence>MIVAVGIDVVLVERFTRALARTPLLADRLFTEAERYTRSGNPRSPESLAARFAAKEAVAKALGAPAGLSWHDCEIVPDPDGRPWLTVSGTVAAAAVERGASRWHLSLSHDGGIASAMVVAER</sequence>
<accession>A8M4B5</accession>
<gene>
    <name evidence="1" type="primary">acpS</name>
    <name type="ordered locus">Sare_4249</name>
</gene>
<keyword id="KW-0963">Cytoplasm</keyword>
<keyword id="KW-0275">Fatty acid biosynthesis</keyword>
<keyword id="KW-0276">Fatty acid metabolism</keyword>
<keyword id="KW-0444">Lipid biosynthesis</keyword>
<keyword id="KW-0443">Lipid metabolism</keyword>
<keyword id="KW-0460">Magnesium</keyword>
<keyword id="KW-0479">Metal-binding</keyword>
<keyword id="KW-0808">Transferase</keyword>
<reference key="1">
    <citation type="submission" date="2007-10" db="EMBL/GenBank/DDBJ databases">
        <title>Complete sequence of Salinispora arenicola CNS-205.</title>
        <authorList>
            <consortium name="US DOE Joint Genome Institute"/>
            <person name="Copeland A."/>
            <person name="Lucas S."/>
            <person name="Lapidus A."/>
            <person name="Barry K."/>
            <person name="Glavina del Rio T."/>
            <person name="Dalin E."/>
            <person name="Tice H."/>
            <person name="Pitluck S."/>
            <person name="Foster B."/>
            <person name="Schmutz J."/>
            <person name="Larimer F."/>
            <person name="Land M."/>
            <person name="Hauser L."/>
            <person name="Kyrpides N."/>
            <person name="Ivanova N."/>
            <person name="Jensen P.R."/>
            <person name="Moore B.S."/>
            <person name="Penn K."/>
            <person name="Jenkins C."/>
            <person name="Udwary D."/>
            <person name="Xiang L."/>
            <person name="Gontang E."/>
            <person name="Richardson P."/>
        </authorList>
    </citation>
    <scope>NUCLEOTIDE SEQUENCE [LARGE SCALE GENOMIC DNA]</scope>
    <source>
        <strain>CNS-205</strain>
    </source>
</reference>